<feature type="chain" id="PRO_0000299927" description="Putative uncharacterized protein YHR052W-A">
    <location>
        <begin position="1"/>
        <end position="64"/>
    </location>
</feature>
<feature type="transmembrane region" description="Helical" evidence="1">
    <location>
        <begin position="33"/>
        <end position="55"/>
    </location>
</feature>
<comment type="subcellular location">
    <subcellularLocation>
        <location evidence="2">Membrane</location>
        <topology evidence="2">Single-pass membrane protein</topology>
    </subcellularLocation>
</comment>
<comment type="miscellaneous">
    <text evidence="2">Partially overlaps CUP1-1.</text>
</comment>
<comment type="caution">
    <text evidence="3">Product of a dubious gene prediction unlikely to encode a functional protein. Because of that it is not part of the S.cerevisiae S288c complete/reference proteome set.</text>
</comment>
<name>YH052_YEAST</name>
<proteinExistence type="uncertain"/>
<gene>
    <name type="ordered locus">YHR052W-A</name>
</gene>
<reference key="1">
    <citation type="journal article" date="1994" name="Science">
        <title>Complete nucleotide sequence of Saccharomyces cerevisiae chromosome VIII.</title>
        <authorList>
            <person name="Johnston M."/>
            <person name="Andrews S."/>
            <person name="Brinkman R."/>
            <person name="Cooper J."/>
            <person name="Ding H."/>
            <person name="Dover J."/>
            <person name="Du Z."/>
            <person name="Favello A."/>
            <person name="Fulton L."/>
            <person name="Gattung S."/>
            <person name="Geisel C."/>
            <person name="Kirsten J."/>
            <person name="Kucaba T."/>
            <person name="Hillier L.W."/>
            <person name="Jier M."/>
            <person name="Johnston L."/>
            <person name="Langston Y."/>
            <person name="Latreille P."/>
            <person name="Louis E.J."/>
            <person name="Macri C."/>
            <person name="Mardis E."/>
            <person name="Menezes S."/>
            <person name="Mouser L."/>
            <person name="Nhan M."/>
            <person name="Rifkin L."/>
            <person name="Riles L."/>
            <person name="St Peter H."/>
            <person name="Trevaskis E."/>
            <person name="Vaughan K."/>
            <person name="Vignati D."/>
            <person name="Wilcox L."/>
            <person name="Wohldman P."/>
            <person name="Waterston R."/>
            <person name="Wilson R."/>
            <person name="Vaudin M."/>
        </authorList>
    </citation>
    <scope>NUCLEOTIDE SEQUENCE [LARGE SCALE GENOMIC DNA]</scope>
    <source>
        <strain>ATCC 204508 / S288c</strain>
    </source>
</reference>
<reference key="2">
    <citation type="journal article" date="2014" name="G3 (Bethesda)">
        <title>The reference genome sequence of Saccharomyces cerevisiae: Then and now.</title>
        <authorList>
            <person name="Engel S.R."/>
            <person name="Dietrich F.S."/>
            <person name="Fisk D.G."/>
            <person name="Binkley G."/>
            <person name="Balakrishnan R."/>
            <person name="Costanzo M.C."/>
            <person name="Dwight S.S."/>
            <person name="Hitz B.C."/>
            <person name="Karra K."/>
            <person name="Nash R.S."/>
            <person name="Weng S."/>
            <person name="Wong E.D."/>
            <person name="Lloyd P."/>
            <person name="Skrzypek M.S."/>
            <person name="Miyasato S.R."/>
            <person name="Simison M."/>
            <person name="Cherry J.M."/>
        </authorList>
    </citation>
    <scope>GENOME REANNOTATION</scope>
    <source>
        <strain>ATCC 204508 / S288c</strain>
    </source>
</reference>
<reference key="3">
    <citation type="journal article" date="2002" name="Nat. Biotechnol.">
        <title>An integrated approach for finding overlooked genes in yeast.</title>
        <authorList>
            <person name="Kumar A."/>
            <person name="Harrison P.M."/>
            <person name="Cheung K.-H."/>
            <person name="Lan N."/>
            <person name="Echols N."/>
            <person name="Bertone P."/>
            <person name="Miller P."/>
            <person name="Gerstein M.B."/>
            <person name="Snyder M."/>
        </authorList>
    </citation>
    <scope>NUCLEOTIDE SEQUENCE [GENOMIC DNA]</scope>
</reference>
<evidence type="ECO:0000255" key="1"/>
<evidence type="ECO:0000305" key="2"/>
<evidence type="ECO:0000305" key="3">
    <source>
    </source>
</evidence>
<protein>
    <recommendedName>
        <fullName>Putative uncharacterized protein YHR052W-A</fullName>
    </recommendedName>
</protein>
<accession>P0CL32</accession>
<accession>Q8TF97</accession>
<dbReference type="EMBL" id="U00061">
    <property type="status" value="NOT_ANNOTATED_CDS"/>
    <property type="molecule type" value="Genomic_DNA"/>
</dbReference>
<dbReference type="EMBL" id="AF479925">
    <property type="protein sequence ID" value="AAL79238.1"/>
    <property type="molecule type" value="Genomic_DNA"/>
</dbReference>
<dbReference type="STRING" id="4932.YHR052W-A"/>
<dbReference type="PaxDb" id="4932-YHR052W-A"/>
<dbReference type="EnsemblFungi" id="YHR052W-A_mRNA">
    <property type="protein sequence ID" value="YHR052W-A"/>
    <property type="gene ID" value="YHR052W-A"/>
</dbReference>
<dbReference type="EnsemblFungi" id="YHR054W-A_mRNA">
    <property type="protein sequence ID" value="YHR054W-A"/>
    <property type="gene ID" value="YHR054W-A"/>
</dbReference>
<dbReference type="AGR" id="SGD:S000028647"/>
<dbReference type="SGD" id="S000028647">
    <property type="gene designation" value="YHR052W-A"/>
</dbReference>
<dbReference type="HOGENOM" id="CLU_2868877_0_0_1"/>
<dbReference type="GO" id="GO:0016020">
    <property type="term" value="C:membrane"/>
    <property type="evidence" value="ECO:0007669"/>
    <property type="project" value="UniProtKB-SubCell"/>
</dbReference>
<sequence length="64" mass="7517">MNILKTIRFISQSSMTSWFLQTCYRRGICRRCYTPLGSYMIFGIVHYFCSYHIGIGTHDLHFGS</sequence>
<organism>
    <name type="scientific">Saccharomyces cerevisiae (strain ATCC 204508 / S288c)</name>
    <name type="common">Baker's yeast</name>
    <dbReference type="NCBI Taxonomy" id="559292"/>
    <lineage>
        <taxon>Eukaryota</taxon>
        <taxon>Fungi</taxon>
        <taxon>Dikarya</taxon>
        <taxon>Ascomycota</taxon>
        <taxon>Saccharomycotina</taxon>
        <taxon>Saccharomycetes</taxon>
        <taxon>Saccharomycetales</taxon>
        <taxon>Saccharomycetaceae</taxon>
        <taxon>Saccharomyces</taxon>
    </lineage>
</organism>
<keyword id="KW-0472">Membrane</keyword>
<keyword id="KW-0812">Transmembrane</keyword>
<keyword id="KW-1133">Transmembrane helix</keyword>